<protein>
    <recommendedName>
        <fullName>Putative S-adenosyl-L-methionine-dependent methyltransferase MAP_0663</fullName>
        <ecNumber>2.1.1.-</ecNumber>
    </recommendedName>
</protein>
<reference key="1">
    <citation type="journal article" date="2005" name="Proc. Natl. Acad. Sci. U.S.A.">
        <title>The complete genome sequence of Mycobacterium avium subspecies paratuberculosis.</title>
        <authorList>
            <person name="Li L."/>
            <person name="Bannantine J.P."/>
            <person name="Zhang Q."/>
            <person name="Amonsin A."/>
            <person name="May B.J."/>
            <person name="Alt D."/>
            <person name="Banerji N."/>
            <person name="Kanjilal S."/>
            <person name="Kapur V."/>
        </authorList>
    </citation>
    <scope>NUCLEOTIDE SEQUENCE [LARGE SCALE GENOMIC DNA]</scope>
    <source>
        <strain>ATCC BAA-968 / K-10</strain>
    </source>
</reference>
<proteinExistence type="inferred from homology"/>
<organism>
    <name type="scientific">Mycolicibacterium paratuberculosis (strain ATCC BAA-968 / K-10)</name>
    <name type="common">Mycobacterium paratuberculosis</name>
    <dbReference type="NCBI Taxonomy" id="262316"/>
    <lineage>
        <taxon>Bacteria</taxon>
        <taxon>Bacillati</taxon>
        <taxon>Actinomycetota</taxon>
        <taxon>Actinomycetes</taxon>
        <taxon>Mycobacteriales</taxon>
        <taxon>Mycobacteriaceae</taxon>
        <taxon>Mycobacterium</taxon>
        <taxon>Mycobacterium avium complex (MAC)</taxon>
    </lineage>
</organism>
<sequence length="268" mass="29499">MARTDRDRWDLATSVGATATMVAAQRALSSDANLIDDPYAAPLVRAVGIDVYVRLVDGEIQPGTSEFDPHRMAKGMACRTRFYDDFFLDAARAGVGQAVILASGLDARAYRLPWPAGTVVYEVDMPDVIEFKTLTLADLGAQPTAQRRTVAIDLRDDWAAALREERFDTQAPAAWSAEGLLVYLPEQAQDALFDNITALSAPGSRLAFDFVPDTAVFADPRWRAHHDRMSELGFEVDFNDLVYHGERSHIVDHLSGRGCSLVPLFRVG</sequence>
<dbReference type="EC" id="2.1.1.-"/>
<dbReference type="EMBL" id="AE016958">
    <property type="protein sequence ID" value="AAS02980.1"/>
    <property type="molecule type" value="Genomic_DNA"/>
</dbReference>
<dbReference type="SMR" id="Q743C2"/>
<dbReference type="STRING" id="262316.MAP_0663"/>
<dbReference type="KEGG" id="mpa:MAP_0663"/>
<dbReference type="PATRIC" id="fig|262316.17.peg.698"/>
<dbReference type="eggNOG" id="COG3315">
    <property type="taxonomic scope" value="Bacteria"/>
</dbReference>
<dbReference type="HOGENOM" id="CLU_056160_2_1_11"/>
<dbReference type="Proteomes" id="UP000000580">
    <property type="component" value="Chromosome"/>
</dbReference>
<dbReference type="GO" id="GO:0008168">
    <property type="term" value="F:methyltransferase activity"/>
    <property type="evidence" value="ECO:0007669"/>
    <property type="project" value="UniProtKB-KW"/>
</dbReference>
<dbReference type="GO" id="GO:0032259">
    <property type="term" value="P:methylation"/>
    <property type="evidence" value="ECO:0007669"/>
    <property type="project" value="UniProtKB-KW"/>
</dbReference>
<dbReference type="FunFam" id="3.40.50.150:FF:000152">
    <property type="entry name" value="S-adenosyl-L-methionine-dependent methyltransferase"/>
    <property type="match status" value="1"/>
</dbReference>
<dbReference type="Gene3D" id="3.40.50.150">
    <property type="entry name" value="Vaccinia Virus protein VP39"/>
    <property type="match status" value="1"/>
</dbReference>
<dbReference type="InterPro" id="IPR007213">
    <property type="entry name" value="Ppm1/Ppm2/Tcmp"/>
</dbReference>
<dbReference type="InterPro" id="IPR029063">
    <property type="entry name" value="SAM-dependent_MTases_sf"/>
</dbReference>
<dbReference type="InterPro" id="IPR011610">
    <property type="entry name" value="SAM_mthyl_Trfase_ML2640-like"/>
</dbReference>
<dbReference type="NCBIfam" id="TIGR00027">
    <property type="entry name" value="mthyl_TIGR00027"/>
    <property type="match status" value="1"/>
</dbReference>
<dbReference type="PANTHER" id="PTHR43619">
    <property type="entry name" value="S-ADENOSYL-L-METHIONINE-DEPENDENT METHYLTRANSFERASE YKTD-RELATED"/>
    <property type="match status" value="1"/>
</dbReference>
<dbReference type="PANTHER" id="PTHR43619:SF2">
    <property type="entry name" value="S-ADENOSYL-L-METHIONINE-DEPENDENT METHYLTRANSFERASES SUPERFAMILY PROTEIN"/>
    <property type="match status" value="1"/>
</dbReference>
<dbReference type="Pfam" id="PF04072">
    <property type="entry name" value="LCM"/>
    <property type="match status" value="1"/>
</dbReference>
<dbReference type="SUPFAM" id="SSF53335">
    <property type="entry name" value="S-adenosyl-L-methionine-dependent methyltransferases"/>
    <property type="match status" value="1"/>
</dbReference>
<feature type="chain" id="PRO_0000361191" description="Putative S-adenosyl-L-methionine-dependent methyltransferase MAP_0663">
    <location>
        <begin position="1"/>
        <end position="268"/>
    </location>
</feature>
<feature type="binding site" evidence="1">
    <location>
        <position position="124"/>
    </location>
    <ligand>
        <name>S-adenosyl-L-methionine</name>
        <dbReference type="ChEBI" id="CHEBI:59789"/>
    </ligand>
</feature>
<feature type="binding site" evidence="1">
    <location>
        <begin position="153"/>
        <end position="154"/>
    </location>
    <ligand>
        <name>S-adenosyl-L-methionine</name>
        <dbReference type="ChEBI" id="CHEBI:59789"/>
    </ligand>
</feature>
<keyword id="KW-0489">Methyltransferase</keyword>
<keyword id="KW-1185">Reference proteome</keyword>
<keyword id="KW-0949">S-adenosyl-L-methionine</keyword>
<keyword id="KW-0808">Transferase</keyword>
<comment type="function">
    <text evidence="1">Exhibits S-adenosyl-L-methionine-dependent methyltransferase activity.</text>
</comment>
<comment type="similarity">
    <text evidence="2">Belongs to the UPF0677 family.</text>
</comment>
<evidence type="ECO:0000250" key="1"/>
<evidence type="ECO:0000305" key="2"/>
<gene>
    <name type="ordered locus">MAP_0663</name>
</gene>
<name>Y663_MYCPA</name>
<accession>Q743C2</accession>